<proteinExistence type="inferred from homology"/>
<feature type="chain" id="PRO_0000376314" description="NADH-quinone oxidoreductase subunit B">
    <location>
        <begin position="1"/>
        <end position="225"/>
    </location>
</feature>
<feature type="binding site" evidence="1">
    <location>
        <position position="68"/>
    </location>
    <ligand>
        <name>[4Fe-4S] cluster</name>
        <dbReference type="ChEBI" id="CHEBI:49883"/>
    </ligand>
</feature>
<feature type="binding site" evidence="1">
    <location>
        <position position="69"/>
    </location>
    <ligand>
        <name>[4Fe-4S] cluster</name>
        <dbReference type="ChEBI" id="CHEBI:49883"/>
    </ligand>
</feature>
<feature type="binding site" evidence="1">
    <location>
        <position position="134"/>
    </location>
    <ligand>
        <name>[4Fe-4S] cluster</name>
        <dbReference type="ChEBI" id="CHEBI:49883"/>
    </ligand>
</feature>
<feature type="binding site" evidence="1">
    <location>
        <position position="163"/>
    </location>
    <ligand>
        <name>[4Fe-4S] cluster</name>
        <dbReference type="ChEBI" id="CHEBI:49883"/>
    </ligand>
</feature>
<organism>
    <name type="scientific">Pseudomonas putida (strain ATCC 700007 / DSM 6899 / JCM 31910 / BCRC 17059 / LMG 24140 / F1)</name>
    <dbReference type="NCBI Taxonomy" id="351746"/>
    <lineage>
        <taxon>Bacteria</taxon>
        <taxon>Pseudomonadati</taxon>
        <taxon>Pseudomonadota</taxon>
        <taxon>Gammaproteobacteria</taxon>
        <taxon>Pseudomonadales</taxon>
        <taxon>Pseudomonadaceae</taxon>
        <taxon>Pseudomonas</taxon>
    </lineage>
</organism>
<protein>
    <recommendedName>
        <fullName evidence="1">NADH-quinone oxidoreductase subunit B</fullName>
        <ecNumber evidence="1">7.1.1.-</ecNumber>
    </recommendedName>
    <alternativeName>
        <fullName evidence="1">NADH dehydrogenase I subunit B</fullName>
    </alternativeName>
    <alternativeName>
        <fullName evidence="1">NDH-1 subunit B</fullName>
    </alternativeName>
</protein>
<accession>A5W191</accession>
<comment type="function">
    <text evidence="1">NDH-1 shuttles electrons from NADH, via FMN and iron-sulfur (Fe-S) centers, to quinones in the respiratory chain. The immediate electron acceptor for the enzyme in this species is believed to be ubiquinone. Couples the redox reaction to proton translocation (for every two electrons transferred, four hydrogen ions are translocated across the cytoplasmic membrane), and thus conserves the redox energy in a proton gradient.</text>
</comment>
<comment type="catalytic activity">
    <reaction evidence="1">
        <text>a quinone + NADH + 5 H(+)(in) = a quinol + NAD(+) + 4 H(+)(out)</text>
        <dbReference type="Rhea" id="RHEA:57888"/>
        <dbReference type="ChEBI" id="CHEBI:15378"/>
        <dbReference type="ChEBI" id="CHEBI:24646"/>
        <dbReference type="ChEBI" id="CHEBI:57540"/>
        <dbReference type="ChEBI" id="CHEBI:57945"/>
        <dbReference type="ChEBI" id="CHEBI:132124"/>
    </reaction>
</comment>
<comment type="cofactor">
    <cofactor evidence="1">
        <name>[4Fe-4S] cluster</name>
        <dbReference type="ChEBI" id="CHEBI:49883"/>
    </cofactor>
    <text evidence="1">Binds 1 [4Fe-4S] cluster.</text>
</comment>
<comment type="subunit">
    <text evidence="1">NDH-1 is composed of 13 different subunits. Subunits NuoB, CD, E, F, and G constitute the peripheral sector of the complex.</text>
</comment>
<comment type="subcellular location">
    <subcellularLocation>
        <location evidence="1">Cell inner membrane</location>
        <topology evidence="1">Peripheral membrane protein</topology>
        <orientation evidence="1">Cytoplasmic side</orientation>
    </subcellularLocation>
</comment>
<comment type="similarity">
    <text evidence="1">Belongs to the complex I 20 kDa subunit family.</text>
</comment>
<dbReference type="EC" id="7.1.1.-" evidence="1"/>
<dbReference type="EMBL" id="CP000712">
    <property type="protein sequence ID" value="ABQ77901.1"/>
    <property type="molecule type" value="Genomic_DNA"/>
</dbReference>
<dbReference type="SMR" id="A5W191"/>
<dbReference type="KEGG" id="ppf:Pput_1745"/>
<dbReference type="eggNOG" id="COG0377">
    <property type="taxonomic scope" value="Bacteria"/>
</dbReference>
<dbReference type="HOGENOM" id="CLU_055737_7_3_6"/>
<dbReference type="GO" id="GO:0005886">
    <property type="term" value="C:plasma membrane"/>
    <property type="evidence" value="ECO:0007669"/>
    <property type="project" value="UniProtKB-SubCell"/>
</dbReference>
<dbReference type="GO" id="GO:0045271">
    <property type="term" value="C:respiratory chain complex I"/>
    <property type="evidence" value="ECO:0007669"/>
    <property type="project" value="TreeGrafter"/>
</dbReference>
<dbReference type="GO" id="GO:0051539">
    <property type="term" value="F:4 iron, 4 sulfur cluster binding"/>
    <property type="evidence" value="ECO:0007669"/>
    <property type="project" value="UniProtKB-KW"/>
</dbReference>
<dbReference type="GO" id="GO:0005506">
    <property type="term" value="F:iron ion binding"/>
    <property type="evidence" value="ECO:0007669"/>
    <property type="project" value="UniProtKB-UniRule"/>
</dbReference>
<dbReference type="GO" id="GO:0008137">
    <property type="term" value="F:NADH dehydrogenase (ubiquinone) activity"/>
    <property type="evidence" value="ECO:0007669"/>
    <property type="project" value="InterPro"/>
</dbReference>
<dbReference type="GO" id="GO:0050136">
    <property type="term" value="F:NADH:ubiquinone reductase (non-electrogenic) activity"/>
    <property type="evidence" value="ECO:0007669"/>
    <property type="project" value="UniProtKB-UniRule"/>
</dbReference>
<dbReference type="GO" id="GO:0048038">
    <property type="term" value="F:quinone binding"/>
    <property type="evidence" value="ECO:0007669"/>
    <property type="project" value="UniProtKB-KW"/>
</dbReference>
<dbReference type="GO" id="GO:0009060">
    <property type="term" value="P:aerobic respiration"/>
    <property type="evidence" value="ECO:0007669"/>
    <property type="project" value="TreeGrafter"/>
</dbReference>
<dbReference type="GO" id="GO:0015990">
    <property type="term" value="P:electron transport coupled proton transport"/>
    <property type="evidence" value="ECO:0007669"/>
    <property type="project" value="TreeGrafter"/>
</dbReference>
<dbReference type="FunFam" id="3.40.50.12280:FF:000002">
    <property type="entry name" value="NADH-quinone oxidoreductase subunit B"/>
    <property type="match status" value="1"/>
</dbReference>
<dbReference type="Gene3D" id="3.40.50.12280">
    <property type="match status" value="1"/>
</dbReference>
<dbReference type="HAMAP" id="MF_01356">
    <property type="entry name" value="NDH1_NuoB"/>
    <property type="match status" value="1"/>
</dbReference>
<dbReference type="InterPro" id="IPR006137">
    <property type="entry name" value="NADH_UbQ_OxRdtase-like_20kDa"/>
</dbReference>
<dbReference type="InterPro" id="IPR006138">
    <property type="entry name" value="NADH_UQ_OxRdtase_20Kd_su"/>
</dbReference>
<dbReference type="NCBIfam" id="TIGR01957">
    <property type="entry name" value="nuoB_fam"/>
    <property type="match status" value="1"/>
</dbReference>
<dbReference type="NCBIfam" id="NF005012">
    <property type="entry name" value="PRK06411.1"/>
    <property type="match status" value="1"/>
</dbReference>
<dbReference type="PANTHER" id="PTHR11995">
    <property type="entry name" value="NADH DEHYDROGENASE"/>
    <property type="match status" value="1"/>
</dbReference>
<dbReference type="PANTHER" id="PTHR11995:SF14">
    <property type="entry name" value="NADH DEHYDROGENASE [UBIQUINONE] IRON-SULFUR PROTEIN 7, MITOCHONDRIAL"/>
    <property type="match status" value="1"/>
</dbReference>
<dbReference type="Pfam" id="PF01058">
    <property type="entry name" value="Oxidored_q6"/>
    <property type="match status" value="1"/>
</dbReference>
<dbReference type="SUPFAM" id="SSF56770">
    <property type="entry name" value="HydA/Nqo6-like"/>
    <property type="match status" value="1"/>
</dbReference>
<dbReference type="PROSITE" id="PS01150">
    <property type="entry name" value="COMPLEX1_20K"/>
    <property type="match status" value="1"/>
</dbReference>
<gene>
    <name evidence="1" type="primary">nuoB</name>
    <name type="ordered locus">Pput_1745</name>
</gene>
<sequence length="225" mass="25523">MQYNLTRIDPDAPNEQYPVGERETVTDQLLEDQVHKNIFMGKLEDVLRGAVNWGRKNSLWPYNFGLSCCYVEMTTAFTAPHDIARFGAEVIRASPRQADFMVIAGTCFVKMAPIIQRLYEQMLEPKWVISMGSCANSGGMYDIYSVVQGVDKFLPVDVYVPGCPPRPEAFLQGLMLLQESIGQERRPLSWVVGDQGIYRAEMPAQKDLRREQRIAVTNLRSPDEV</sequence>
<evidence type="ECO:0000255" key="1">
    <source>
        <dbReference type="HAMAP-Rule" id="MF_01356"/>
    </source>
</evidence>
<name>NUOB_PSEP1</name>
<keyword id="KW-0004">4Fe-4S</keyword>
<keyword id="KW-0997">Cell inner membrane</keyword>
<keyword id="KW-1003">Cell membrane</keyword>
<keyword id="KW-0408">Iron</keyword>
<keyword id="KW-0411">Iron-sulfur</keyword>
<keyword id="KW-0472">Membrane</keyword>
<keyword id="KW-0479">Metal-binding</keyword>
<keyword id="KW-0520">NAD</keyword>
<keyword id="KW-0874">Quinone</keyword>
<keyword id="KW-1278">Translocase</keyword>
<keyword id="KW-0813">Transport</keyword>
<keyword id="KW-0830">Ubiquinone</keyword>
<reference key="1">
    <citation type="submission" date="2007-05" db="EMBL/GenBank/DDBJ databases">
        <title>Complete sequence of Pseudomonas putida F1.</title>
        <authorList>
            <consortium name="US DOE Joint Genome Institute"/>
            <person name="Copeland A."/>
            <person name="Lucas S."/>
            <person name="Lapidus A."/>
            <person name="Barry K."/>
            <person name="Detter J.C."/>
            <person name="Glavina del Rio T."/>
            <person name="Hammon N."/>
            <person name="Israni S."/>
            <person name="Dalin E."/>
            <person name="Tice H."/>
            <person name="Pitluck S."/>
            <person name="Chain P."/>
            <person name="Malfatti S."/>
            <person name="Shin M."/>
            <person name="Vergez L."/>
            <person name="Schmutz J."/>
            <person name="Larimer F."/>
            <person name="Land M."/>
            <person name="Hauser L."/>
            <person name="Kyrpides N."/>
            <person name="Lykidis A."/>
            <person name="Parales R."/>
            <person name="Richardson P."/>
        </authorList>
    </citation>
    <scope>NUCLEOTIDE SEQUENCE [LARGE SCALE GENOMIC DNA]</scope>
    <source>
        <strain>ATCC 700007 / DSM 6899 / JCM 31910 / BCRC 17059 / LMG 24140 / F1</strain>
    </source>
</reference>